<protein>
    <recommendedName>
        <fullName evidence="8">Alpha-latrotoxin-Lm1a</fullName>
        <shortName evidence="8">Alpha-LTX-Lm1a</shortName>
    </recommendedName>
    <alternativeName>
        <fullName evidence="7">Alpha-latrotoxin</fullName>
        <shortName evidence="7">Alpha-LTX</shortName>
    </alternativeName>
</protein>
<reference key="1">
    <citation type="journal article" date="2012" name="Biochem. Pharmacol.">
        <title>Cloning and activity of a novel alpha-latrotoxin from red-back spider venom.</title>
        <authorList>
            <person name="Graudins A."/>
            <person name="Little M.J."/>
            <person name="Pineda S.S."/>
            <person name="Hains P.G."/>
            <person name="King G.F."/>
            <person name="Broady K.W."/>
            <person name="Nicholson G.M."/>
        </authorList>
    </citation>
    <scope>PROTEIN SEQUENCE</scope>
    <scope>IDENTIFICATION BY MASS SPECTROMETRY</scope>
    <scope>SUBCELLULAR LOCATION</scope>
    <source>
        <tissue>Venom</tissue>
    </source>
</reference>
<reference key="2">
    <citation type="journal article" date="2022" name="J. Med. Entomol.">
        <title>Expression of brown and southern black widow spider (Araneae: Theridiidae) latrotoxins is tissue- and life stage-specific for alpha-latroinsectotoxins and delta-latroinsectotoxins and is ubiquitous for alpha-latrotoxins.</title>
        <authorList>
            <person name="Torres S.L."/>
            <person name="Landeros A."/>
            <person name="Penhallegon E.J."/>
            <person name="Salazar K."/>
            <person name="Porter L.M."/>
        </authorList>
    </citation>
    <scope>TISSUE SPECIFICITY</scope>
    <scope>DEVELOPMENTAL STAGE</scope>
</reference>
<keyword id="KW-0040">ANK repeat</keyword>
<keyword id="KW-0903">Direct protein sequencing</keyword>
<keyword id="KW-1015">Disulfide bond</keyword>
<keyword id="KW-0268">Exocytosis</keyword>
<keyword id="KW-0472">Membrane</keyword>
<keyword id="KW-0528">Neurotoxin</keyword>
<keyword id="KW-0638">Presynaptic neurotoxin</keyword>
<keyword id="KW-0677">Repeat</keyword>
<keyword id="KW-0964">Secreted</keyword>
<keyword id="KW-1052">Target cell membrane</keyword>
<keyword id="KW-1053">Target membrane</keyword>
<keyword id="KW-0800">Toxin</keyword>
<keyword id="KW-0812">Transmembrane</keyword>
<comment type="function">
    <text evidence="2">Presynaptic neurotoxin that causes massive release of neurotransmitters from vertebrate (but not invertebrate) nerve terminals and endocrine cells via a complex mechanism involving activation of receptor(s) and toxin insertion into the plasma membrane with subsequent pore formation. Binds to neurexin-1-alpha (NRXN1) in a calcium dependent manner, adhesion G protein-coupled receptor L1 (ADGRL1, also termed latrophilin-1 and calcium-independent receptor of latrotoxin (CIRL)), and receptor-type tyrosine-protein phosphatase S (PTPRS), also termed PTP sigma. NRXN1 and PTPRS are suggested to provide a platform for binding and subsequent pore formation events. In contrast, binding to ADGRL1 does not involve oligomerization and channel formation, but direct downstream stimulation of the synaptic fusion machinery.</text>
</comment>
<comment type="subunit">
    <text evidence="2">Homotetramer in membranes.</text>
</comment>
<comment type="subcellular location">
    <subcellularLocation>
        <location evidence="5">Secreted</location>
    </subcellularLocation>
    <subcellularLocation>
        <location evidence="2">Target cell membrane</location>
    </subcellularLocation>
    <text evidence="2">Forms a membrane channel in the prey.</text>
</comment>
<comment type="tissue specificity">
    <text evidence="6">Expressed in venom gland, cephalothorax, and abdomen tissues from both males and females.</text>
</comment>
<comment type="developmental stage">
    <text evidence="6">Expressed in all life stages examined, including adults, spiderlings and eggs.</text>
</comment>
<comment type="domain">
    <text evidence="3">The H8 helix is predicted to insert into membranes and form pores by assembling into tetramers. The helix is contained within a helical bundle domain that undergoes significant conformational changes during pore formation to allow exposure of the H8 transmembrane helix and transition of the toxin from a soluble monomer to a transmembrane tetramer.</text>
</comment>
<comment type="PTM">
    <text evidence="1">Processed by furin-like proteases at both the N- and C-termini.</text>
</comment>
<comment type="PTM">
    <text evidence="2">Contains 1 disulfide bond.</text>
</comment>
<comment type="miscellaneous">
    <text>Is the main neurotoxin responsible for the human envenomation syndrome known as latrodectism that results from bites by Latrodectus species.</text>
</comment>
<comment type="miscellaneous">
    <text>Iso and Leu residues are assigned by comparison with orthologs.</text>
</comment>
<comment type="similarity">
    <text evidence="8">Belongs to the cationic peptide 01 (latrotoxin) family. 03 (alpha-latrotoxin) subfamily.</text>
</comment>
<feature type="chain" id="PRO_0000415933" description="Alpha-latrotoxin-Lm1a">
    <location>
        <begin position="1" status="less than"/>
        <end position="202" status="greater than"/>
    </location>
</feature>
<feature type="repeat" description="ANK 1" evidence="4 8">
    <location>
        <begin position="95"/>
        <end position="109" status="greater than"/>
    </location>
</feature>
<feature type="repeat" description="ANK 2" evidence="4 8">
    <location>
        <begin position="110" status="less than"/>
        <end position="120"/>
    </location>
</feature>
<feature type="repeat" description="ANK 3" evidence="4 8">
    <location>
        <begin position="122" status="less than"/>
        <end position="132" status="greater than"/>
    </location>
</feature>
<feature type="repeat" description="ANK 4" evidence="4 8">
    <location>
        <begin position="133" status="less than"/>
        <end position="138"/>
    </location>
</feature>
<feature type="repeat" description="ANK 5" evidence="4">
    <location>
        <begin position="142"/>
        <end position="161"/>
    </location>
</feature>
<feature type="repeat" description="ANK 6" evidence="4 8">
    <location>
        <begin position="163" status="less than"/>
        <end position="170" status="greater than"/>
    </location>
</feature>
<feature type="repeat" description="ANK 7" evidence="4 8">
    <location>
        <begin position="171" status="less than"/>
        <end position="182"/>
    </location>
</feature>
<feature type="repeat" description="ANK 8" evidence="4 8">
    <location>
        <begin position="184"/>
        <end position="184" status="greater than"/>
    </location>
</feature>
<feature type="repeat" description="ANK 9" evidence="4 8">
    <location>
        <begin position="185" status="less than"/>
        <end position="191"/>
    </location>
</feature>
<feature type="repeat" description="ANK 10" evidence="4 8">
    <location>
        <begin position="193" status="less than"/>
        <end position="202" status="greater than"/>
    </location>
</feature>
<feature type="region of interest" description="4C4.1 epitope" evidence="1">
    <location>
        <begin position="175"/>
        <end position="181"/>
    </location>
</feature>
<feature type="non-consecutive residues" evidence="8">
    <location>
        <begin position="19"/>
        <end position="20"/>
    </location>
</feature>
<feature type="non-consecutive residues" evidence="8">
    <location>
        <begin position="38"/>
        <end position="39"/>
    </location>
</feature>
<feature type="non-consecutive residues" evidence="8">
    <location>
        <begin position="53"/>
        <end position="54"/>
    </location>
</feature>
<feature type="non-consecutive residues" evidence="8">
    <location>
        <begin position="70"/>
        <end position="71"/>
    </location>
</feature>
<feature type="non-consecutive residues" evidence="8">
    <location>
        <begin position="80"/>
        <end position="81"/>
    </location>
</feature>
<feature type="non-consecutive residues" evidence="8">
    <location>
        <begin position="93"/>
        <end position="94"/>
    </location>
</feature>
<feature type="non-consecutive residues" evidence="8">
    <location>
        <begin position="109"/>
        <end position="110"/>
    </location>
</feature>
<feature type="non-consecutive residues" evidence="8">
    <location>
        <begin position="121"/>
        <end position="122"/>
    </location>
</feature>
<feature type="non-consecutive residues" evidence="8">
    <location>
        <begin position="132"/>
        <end position="133"/>
    </location>
</feature>
<feature type="non-consecutive residues" evidence="8">
    <location>
        <begin position="141"/>
        <end position="142"/>
    </location>
</feature>
<feature type="non-consecutive residues" evidence="8">
    <location>
        <begin position="150"/>
        <end position="151"/>
    </location>
</feature>
<feature type="non-consecutive residues" evidence="8">
    <location>
        <begin position="162"/>
        <end position="163"/>
    </location>
</feature>
<feature type="non-consecutive residues" evidence="8">
    <location>
        <begin position="170"/>
        <end position="171"/>
    </location>
</feature>
<feature type="non-consecutive residues" evidence="8">
    <location>
        <begin position="184"/>
        <end position="185"/>
    </location>
</feature>
<feature type="non-consecutive residues" evidence="8">
    <location>
        <begin position="192"/>
        <end position="193"/>
    </location>
</feature>
<feature type="non-terminal residue">
    <location>
        <position position="1"/>
    </location>
</feature>
<feature type="non-terminal residue">
    <location>
        <position position="202"/>
    </location>
</feature>
<proteinExistence type="evidence at protein level"/>
<accession>P0DJE4</accession>
<dbReference type="GO" id="GO:0005576">
    <property type="term" value="C:extracellular region"/>
    <property type="evidence" value="ECO:0007669"/>
    <property type="project" value="UniProtKB-SubCell"/>
</dbReference>
<dbReference type="GO" id="GO:0044231">
    <property type="term" value="C:host cell presynaptic membrane"/>
    <property type="evidence" value="ECO:0007669"/>
    <property type="project" value="UniProtKB-KW"/>
</dbReference>
<dbReference type="GO" id="GO:0016020">
    <property type="term" value="C:membrane"/>
    <property type="evidence" value="ECO:0007669"/>
    <property type="project" value="UniProtKB-KW"/>
</dbReference>
<dbReference type="GO" id="GO:0044218">
    <property type="term" value="C:other organism cell membrane"/>
    <property type="evidence" value="ECO:0007669"/>
    <property type="project" value="UniProtKB-KW"/>
</dbReference>
<dbReference type="GO" id="GO:0090729">
    <property type="term" value="F:toxin activity"/>
    <property type="evidence" value="ECO:0007669"/>
    <property type="project" value="UniProtKB-KW"/>
</dbReference>
<dbReference type="GO" id="GO:0006887">
    <property type="term" value="P:exocytosis"/>
    <property type="evidence" value="ECO:0007669"/>
    <property type="project" value="UniProtKB-KW"/>
</dbReference>
<dbReference type="Gene3D" id="1.25.40.20">
    <property type="entry name" value="Ankyrin repeat-containing domain"/>
    <property type="match status" value="1"/>
</dbReference>
<dbReference type="InterPro" id="IPR036770">
    <property type="entry name" value="Ankyrin_rpt-contain_sf"/>
</dbReference>
<dbReference type="SUPFAM" id="SSF48403">
    <property type="entry name" value="Ankyrin repeat"/>
    <property type="match status" value="1"/>
</dbReference>
<evidence type="ECO:0000250" key="1"/>
<evidence type="ECO:0000250" key="2">
    <source>
        <dbReference type="UniProtKB" id="P23631"/>
    </source>
</evidence>
<evidence type="ECO:0000250" key="3">
    <source>
        <dbReference type="UniProtKB" id="Q9XZC0"/>
    </source>
</evidence>
<evidence type="ECO:0000255" key="4"/>
<evidence type="ECO:0000269" key="5">
    <source>
    </source>
</evidence>
<evidence type="ECO:0000269" key="6">
    <source>
    </source>
</evidence>
<evidence type="ECO:0000303" key="7">
    <source>
    </source>
</evidence>
<evidence type="ECO:0000305" key="8"/>
<sequence>IVGTIAAAAMTVTHVASGRLNDYILKLEEPNGILLHFKAPLFSIIQEGYAVPKSSLVGTGTSNNEGLLDRNGVDEMLNEKYAVQYASETLFSKDLYNAASNPDSAVGFKLMESPEININERNDWPVASTLLRSSNVNVNLKNSDTPLNLAYFIDQGADINTRNGHLNIVKYLVEEEDLSVDGSKYGIDMTIRTALDIATDLK</sequence>
<organism>
    <name type="scientific">Latrodectus mactans</name>
    <name type="common">Black widow spider</name>
    <name type="synonym">Aranea mactans</name>
    <dbReference type="NCBI Taxonomy" id="6924"/>
    <lineage>
        <taxon>Eukaryota</taxon>
        <taxon>Metazoa</taxon>
        <taxon>Ecdysozoa</taxon>
        <taxon>Arthropoda</taxon>
        <taxon>Chelicerata</taxon>
        <taxon>Arachnida</taxon>
        <taxon>Araneae</taxon>
        <taxon>Araneomorphae</taxon>
        <taxon>Entelegynae</taxon>
        <taxon>Araneoidea</taxon>
        <taxon>Theridiidae</taxon>
        <taxon>Latrodectus</taxon>
    </lineage>
</organism>
<name>LATA_LATMA</name>